<dbReference type="EC" id="1.3.5.3" evidence="1"/>
<dbReference type="EMBL" id="AE014075">
    <property type="protein sequence ID" value="AAN83230.1"/>
    <property type="molecule type" value="Genomic_DNA"/>
</dbReference>
<dbReference type="RefSeq" id="WP_000853959.1">
    <property type="nucleotide sequence ID" value="NZ_CP051263.1"/>
</dbReference>
<dbReference type="SMR" id="P0ACB5"/>
<dbReference type="STRING" id="199310.c4797"/>
<dbReference type="GeneID" id="75174084"/>
<dbReference type="KEGG" id="ecc:c4797"/>
<dbReference type="eggNOG" id="COG4635">
    <property type="taxonomic scope" value="Bacteria"/>
</dbReference>
<dbReference type="HOGENOM" id="CLU_094839_0_1_6"/>
<dbReference type="BioCyc" id="ECOL199310:C4797-MONOMER"/>
<dbReference type="UniPathway" id="UPA00251">
    <property type="reaction ID" value="UER00324"/>
</dbReference>
<dbReference type="Proteomes" id="UP000001410">
    <property type="component" value="Chromosome"/>
</dbReference>
<dbReference type="GO" id="GO:0005886">
    <property type="term" value="C:plasma membrane"/>
    <property type="evidence" value="ECO:0007669"/>
    <property type="project" value="UniProtKB-SubCell"/>
</dbReference>
<dbReference type="GO" id="GO:0009055">
    <property type="term" value="F:electron transfer activity"/>
    <property type="evidence" value="ECO:0007669"/>
    <property type="project" value="InterPro"/>
</dbReference>
<dbReference type="GO" id="GO:0010181">
    <property type="term" value="F:FMN binding"/>
    <property type="evidence" value="ECO:0007669"/>
    <property type="project" value="UniProtKB-UniRule"/>
</dbReference>
<dbReference type="GO" id="GO:0070819">
    <property type="term" value="F:menaquinone-dependent protoporphyrinogen oxidase activity"/>
    <property type="evidence" value="ECO:0007669"/>
    <property type="project" value="UniProtKB-UniRule"/>
</dbReference>
<dbReference type="GO" id="GO:0004729">
    <property type="term" value="F:oxygen-dependent protoporphyrinogen oxidase activity"/>
    <property type="evidence" value="ECO:0007669"/>
    <property type="project" value="InterPro"/>
</dbReference>
<dbReference type="GO" id="GO:0006782">
    <property type="term" value="P:protoporphyrinogen IX biosynthetic process"/>
    <property type="evidence" value="ECO:0007669"/>
    <property type="project" value="UniProtKB-UniRule"/>
</dbReference>
<dbReference type="FunFam" id="3.40.50.360:FF:000017">
    <property type="entry name" value="Protoporphyrinogen oxidase (PPO)"/>
    <property type="match status" value="1"/>
</dbReference>
<dbReference type="Gene3D" id="3.40.50.360">
    <property type="match status" value="1"/>
</dbReference>
<dbReference type="HAMAP" id="MF_00853">
    <property type="entry name" value="HemG"/>
    <property type="match status" value="1"/>
</dbReference>
<dbReference type="InterPro" id="IPR008254">
    <property type="entry name" value="Flavodoxin/NO_synth"/>
</dbReference>
<dbReference type="InterPro" id="IPR001226">
    <property type="entry name" value="Flavodoxin_CS"/>
</dbReference>
<dbReference type="InterPro" id="IPR026816">
    <property type="entry name" value="Flavodoxin_dom"/>
</dbReference>
<dbReference type="InterPro" id="IPR029039">
    <property type="entry name" value="Flavoprotein-like_sf"/>
</dbReference>
<dbReference type="InterPro" id="IPR044264">
    <property type="entry name" value="HemG"/>
</dbReference>
<dbReference type="InterPro" id="IPR052200">
    <property type="entry name" value="Protoporphyrinogen_IX_DH"/>
</dbReference>
<dbReference type="NCBIfam" id="NF008316">
    <property type="entry name" value="PRK11104.1"/>
    <property type="match status" value="1"/>
</dbReference>
<dbReference type="PANTHER" id="PTHR38030">
    <property type="entry name" value="PROTOPORPHYRINOGEN IX DEHYDROGENASE [MENAQUINONE]"/>
    <property type="match status" value="1"/>
</dbReference>
<dbReference type="PANTHER" id="PTHR38030:SF2">
    <property type="entry name" value="PROTOPORPHYRINOGEN IX DEHYDROGENASE [QUINONE]"/>
    <property type="match status" value="1"/>
</dbReference>
<dbReference type="Pfam" id="PF12724">
    <property type="entry name" value="Flavodoxin_5"/>
    <property type="match status" value="1"/>
</dbReference>
<dbReference type="SUPFAM" id="SSF52218">
    <property type="entry name" value="Flavoproteins"/>
    <property type="match status" value="1"/>
</dbReference>
<dbReference type="PROSITE" id="PS00201">
    <property type="entry name" value="FLAVODOXIN"/>
    <property type="match status" value="1"/>
</dbReference>
<dbReference type="PROSITE" id="PS50902">
    <property type="entry name" value="FLAVODOXIN_LIKE"/>
    <property type="match status" value="1"/>
</dbReference>
<proteinExistence type="inferred from homology"/>
<protein>
    <recommendedName>
        <fullName evidence="1">Protoporphyrinogen IX dehydrogenase [quinone]</fullName>
        <ecNumber evidence="1">1.3.5.3</ecNumber>
    </recommendedName>
    <alternativeName>
        <fullName evidence="1">Protoporphyrinogen IX dehydrogenase [menaquinone]</fullName>
    </alternativeName>
    <alternativeName>
        <fullName evidence="1">Protoporphyrinogen IX dehydrogenase [ubiquinone]</fullName>
    </alternativeName>
    <alternativeName>
        <fullName evidence="1">Protoporphyrinogen oxidase</fullName>
        <shortName evidence="1">PPO</shortName>
    </alternativeName>
</protein>
<evidence type="ECO:0000255" key="1">
    <source>
        <dbReference type="HAMAP-Rule" id="MF_00853"/>
    </source>
</evidence>
<comment type="function">
    <text evidence="1">Catalyzes the 6-electron oxidation of protoporphyrinogen IX to form protoporphyrin IX; under anaerobic conditions uses menaquinone as an electron acceptor, under aerobic condition uses ubiquinone as an electron acceptor.</text>
</comment>
<comment type="catalytic activity">
    <reaction evidence="1">
        <text>protoporphyrinogen IX + 3 a menaquinone = protoporphyrin IX + 3 a menaquinol</text>
        <dbReference type="Rhea" id="RHEA:27409"/>
        <dbReference type="Rhea" id="RHEA-COMP:9537"/>
        <dbReference type="Rhea" id="RHEA-COMP:9539"/>
        <dbReference type="ChEBI" id="CHEBI:16374"/>
        <dbReference type="ChEBI" id="CHEBI:18151"/>
        <dbReference type="ChEBI" id="CHEBI:57306"/>
        <dbReference type="ChEBI" id="CHEBI:57307"/>
        <dbReference type="EC" id="1.3.5.3"/>
    </reaction>
</comment>
<comment type="catalytic activity">
    <reaction evidence="1">
        <text>protoporphyrinogen IX + 3 a ubiquinone = protoporphyrin IX + 3 a ubiquinol</text>
        <dbReference type="Rhea" id="RHEA:63936"/>
        <dbReference type="Rhea" id="RHEA-COMP:9565"/>
        <dbReference type="Rhea" id="RHEA-COMP:9566"/>
        <dbReference type="ChEBI" id="CHEBI:16389"/>
        <dbReference type="ChEBI" id="CHEBI:17976"/>
        <dbReference type="ChEBI" id="CHEBI:57306"/>
        <dbReference type="ChEBI" id="CHEBI:57307"/>
    </reaction>
</comment>
<comment type="catalytic activity">
    <reaction evidence="1">
        <text>protoporphyrinogen IX + 3 a quinone = protoporphyrin IX + 3 a quinol</text>
        <dbReference type="Rhea" id="RHEA:65032"/>
        <dbReference type="ChEBI" id="CHEBI:24646"/>
        <dbReference type="ChEBI" id="CHEBI:57306"/>
        <dbReference type="ChEBI" id="CHEBI:57307"/>
        <dbReference type="ChEBI" id="CHEBI:132124"/>
        <dbReference type="EC" id="1.3.5.3"/>
    </reaction>
</comment>
<comment type="cofactor">
    <cofactor evidence="1">
        <name>FMN</name>
        <dbReference type="ChEBI" id="CHEBI:58210"/>
    </cofactor>
    <text evidence="1">Binds 1 FMN non-covalently per subunit.</text>
</comment>
<comment type="pathway">
    <text evidence="1">Porphyrin-containing compound metabolism; protoporphyrin-IX biosynthesis; protoporphyrin-IX from protoporphyrinogen-IX: step 1/1.</text>
</comment>
<comment type="subcellular location">
    <subcellularLocation>
        <location evidence="1">Cell inner membrane</location>
        <topology evidence="1">Peripheral membrane protein</topology>
    </subcellularLocation>
</comment>
<comment type="similarity">
    <text evidence="1">Belongs to the HemG family.</text>
</comment>
<gene>
    <name evidence="1" type="primary">hemG</name>
    <name type="ordered locus">c4797</name>
</gene>
<feature type="chain" id="PRO_0000135261" description="Protoporphyrinogen IX dehydrogenase [quinone]">
    <location>
        <begin position="1"/>
        <end position="181"/>
    </location>
</feature>
<feature type="domain" description="Flavodoxin-like" evidence="1">
    <location>
        <begin position="3"/>
        <end position="172"/>
    </location>
</feature>
<feature type="binding site" evidence="1">
    <location>
        <begin position="9"/>
        <end position="13"/>
    </location>
    <ligand>
        <name>FMN</name>
        <dbReference type="ChEBI" id="CHEBI:58210"/>
    </ligand>
</feature>
<feature type="binding site" evidence="1">
    <location>
        <begin position="84"/>
        <end position="152"/>
    </location>
    <ligand>
        <name>FMN</name>
        <dbReference type="ChEBI" id="CHEBI:58210"/>
    </ligand>
</feature>
<accession>P0ACB5</accession>
<accession>P27863</accession>
<reference key="1">
    <citation type="journal article" date="2002" name="Proc. Natl. Acad. Sci. U.S.A.">
        <title>Extensive mosaic structure revealed by the complete genome sequence of uropathogenic Escherichia coli.</title>
        <authorList>
            <person name="Welch R.A."/>
            <person name="Burland V."/>
            <person name="Plunkett G. III"/>
            <person name="Redford P."/>
            <person name="Roesch P."/>
            <person name="Rasko D."/>
            <person name="Buckles E.L."/>
            <person name="Liou S.-R."/>
            <person name="Boutin A."/>
            <person name="Hackett J."/>
            <person name="Stroud D."/>
            <person name="Mayhew G.F."/>
            <person name="Rose D.J."/>
            <person name="Zhou S."/>
            <person name="Schwartz D.C."/>
            <person name="Perna N.T."/>
            <person name="Mobley H.L.T."/>
            <person name="Donnenberg M.S."/>
            <person name="Blattner F.R."/>
        </authorList>
    </citation>
    <scope>NUCLEOTIDE SEQUENCE [LARGE SCALE GENOMIC DNA]</scope>
    <source>
        <strain>CFT073 / ATCC 700928 / UPEC</strain>
    </source>
</reference>
<sequence length="181" mass="21226">MKTLILFSTRDGQTREIASYLASELKELGIQADVANVHRIEEPQWENYDRVVIGASIRYGHYHSAFQEFVKKHATRLNSMPSAFYSVNLVARKPEKRTPQTNSYARKFLMNSQWRPDRCAVIAGALRYPRYRWYDRFMIKLIMKMSGGETDTRKEVVYTDWEQVANFAREIAHLTDKPTLK</sequence>
<name>HEMG_ECOL6</name>
<keyword id="KW-0997">Cell inner membrane</keyword>
<keyword id="KW-1003">Cell membrane</keyword>
<keyword id="KW-0285">Flavoprotein</keyword>
<keyword id="KW-0288">FMN</keyword>
<keyword id="KW-0472">Membrane</keyword>
<keyword id="KW-0547">Nucleotide-binding</keyword>
<keyword id="KW-0560">Oxidoreductase</keyword>
<keyword id="KW-0627">Porphyrin biosynthesis</keyword>
<keyword id="KW-1185">Reference proteome</keyword>
<organism>
    <name type="scientific">Escherichia coli O6:H1 (strain CFT073 / ATCC 700928 / UPEC)</name>
    <dbReference type="NCBI Taxonomy" id="199310"/>
    <lineage>
        <taxon>Bacteria</taxon>
        <taxon>Pseudomonadati</taxon>
        <taxon>Pseudomonadota</taxon>
        <taxon>Gammaproteobacteria</taxon>
        <taxon>Enterobacterales</taxon>
        <taxon>Enterobacteriaceae</taxon>
        <taxon>Escherichia</taxon>
    </lineage>
</organism>